<reference key="1">
    <citation type="submission" date="2009-04" db="EMBL/GenBank/DDBJ databases">
        <title>Genome sequence of Bacillus anthracis A0248.</title>
        <authorList>
            <person name="Dodson R.J."/>
            <person name="Munk A.C."/>
            <person name="Bruce D."/>
            <person name="Detter C."/>
            <person name="Tapia R."/>
            <person name="Sutton G."/>
            <person name="Sims D."/>
            <person name="Brettin T."/>
        </authorList>
    </citation>
    <scope>NUCLEOTIDE SEQUENCE [LARGE SCALE GENOMIC DNA]</scope>
    <source>
        <strain>A0248</strain>
    </source>
</reference>
<accession>C3P5M8</accession>
<keyword id="KW-0963">Cytoplasm</keyword>
<keyword id="KW-0251">Elongation factor</keyword>
<keyword id="KW-0648">Protein biosynthesis</keyword>
<dbReference type="EMBL" id="CP001598">
    <property type="protein sequence ID" value="ACQ47777.1"/>
    <property type="molecule type" value="Genomic_DNA"/>
</dbReference>
<dbReference type="RefSeq" id="WP_001018581.1">
    <property type="nucleotide sequence ID" value="NC_012659.1"/>
</dbReference>
<dbReference type="SMR" id="C3P5M8"/>
<dbReference type="GeneID" id="45023654"/>
<dbReference type="KEGG" id="bai:BAA_3987"/>
<dbReference type="HOGENOM" id="CLU_047155_0_2_9"/>
<dbReference type="GO" id="GO:0005737">
    <property type="term" value="C:cytoplasm"/>
    <property type="evidence" value="ECO:0007669"/>
    <property type="project" value="UniProtKB-SubCell"/>
</dbReference>
<dbReference type="GO" id="GO:0003746">
    <property type="term" value="F:translation elongation factor activity"/>
    <property type="evidence" value="ECO:0007669"/>
    <property type="project" value="UniProtKB-UniRule"/>
</dbReference>
<dbReference type="CDD" id="cd14275">
    <property type="entry name" value="UBA_EF-Ts"/>
    <property type="match status" value="1"/>
</dbReference>
<dbReference type="FunFam" id="1.10.286.20:FF:000003">
    <property type="entry name" value="Elongation factor Ts"/>
    <property type="match status" value="1"/>
</dbReference>
<dbReference type="FunFam" id="1.10.8.10:FF:000001">
    <property type="entry name" value="Elongation factor Ts"/>
    <property type="match status" value="1"/>
</dbReference>
<dbReference type="FunFam" id="3.30.479.20:FF:000005">
    <property type="entry name" value="Elongation factor Ts"/>
    <property type="match status" value="1"/>
</dbReference>
<dbReference type="Gene3D" id="1.10.286.20">
    <property type="match status" value="1"/>
</dbReference>
<dbReference type="Gene3D" id="1.10.8.10">
    <property type="entry name" value="DNA helicase RuvA subunit, C-terminal domain"/>
    <property type="match status" value="1"/>
</dbReference>
<dbReference type="Gene3D" id="3.30.479.20">
    <property type="entry name" value="Elongation factor Ts, dimerisation domain"/>
    <property type="match status" value="2"/>
</dbReference>
<dbReference type="HAMAP" id="MF_00050">
    <property type="entry name" value="EF_Ts"/>
    <property type="match status" value="1"/>
</dbReference>
<dbReference type="InterPro" id="IPR036402">
    <property type="entry name" value="EF-Ts_dimer_sf"/>
</dbReference>
<dbReference type="InterPro" id="IPR001816">
    <property type="entry name" value="Transl_elong_EFTs/EF1B"/>
</dbReference>
<dbReference type="InterPro" id="IPR014039">
    <property type="entry name" value="Transl_elong_EFTs/EF1B_dimer"/>
</dbReference>
<dbReference type="InterPro" id="IPR018101">
    <property type="entry name" value="Transl_elong_Ts_CS"/>
</dbReference>
<dbReference type="InterPro" id="IPR009060">
    <property type="entry name" value="UBA-like_sf"/>
</dbReference>
<dbReference type="NCBIfam" id="TIGR00116">
    <property type="entry name" value="tsf"/>
    <property type="match status" value="1"/>
</dbReference>
<dbReference type="PANTHER" id="PTHR11741">
    <property type="entry name" value="ELONGATION FACTOR TS"/>
    <property type="match status" value="1"/>
</dbReference>
<dbReference type="PANTHER" id="PTHR11741:SF0">
    <property type="entry name" value="ELONGATION FACTOR TS, MITOCHONDRIAL"/>
    <property type="match status" value="1"/>
</dbReference>
<dbReference type="Pfam" id="PF00889">
    <property type="entry name" value="EF_TS"/>
    <property type="match status" value="1"/>
</dbReference>
<dbReference type="SUPFAM" id="SSF54713">
    <property type="entry name" value="Elongation factor Ts (EF-Ts), dimerisation domain"/>
    <property type="match status" value="2"/>
</dbReference>
<dbReference type="SUPFAM" id="SSF46934">
    <property type="entry name" value="UBA-like"/>
    <property type="match status" value="1"/>
</dbReference>
<dbReference type="PROSITE" id="PS01126">
    <property type="entry name" value="EF_TS_1"/>
    <property type="match status" value="1"/>
</dbReference>
<dbReference type="PROSITE" id="PS01127">
    <property type="entry name" value="EF_TS_2"/>
    <property type="match status" value="1"/>
</dbReference>
<comment type="function">
    <text evidence="1">Associates with the EF-Tu.GDP complex and induces the exchange of GDP to GTP. It remains bound to the aminoacyl-tRNA.EF-Tu.GTP complex up to the GTP hydrolysis stage on the ribosome.</text>
</comment>
<comment type="subcellular location">
    <subcellularLocation>
        <location evidence="1">Cytoplasm</location>
    </subcellularLocation>
</comment>
<comment type="similarity">
    <text evidence="1">Belongs to the EF-Ts family.</text>
</comment>
<sequence>MAITAQMVKELREKTGAGMMDCKKALTETNGDMEKAIDFLREKGIAKAAKKADRIAAEGLTFIETNGNDGLILELNSETDFVAKNEGFQTLIKELAAHLLANKPANVEEAMAQTMENGKKVEEHINEAIAKIGEKLTLRRFEIVSKTDADAFGAYLHMGGRIGVLTVLEGSTDEAAAKDVAMHIAAVNPKYIDRDAVTAEEVEHERQVLTQQALNEGKPEKIVAKMVEGRLGKFFEEICLLDQAFVKNPDMKVRQFVESKGGTLKGFVRYAVGEGIEKREDNFAEEVMNQVKGSN</sequence>
<protein>
    <recommendedName>
        <fullName evidence="1">Elongation factor Ts</fullName>
        <shortName evidence="1">EF-Ts</shortName>
    </recommendedName>
</protein>
<feature type="chain" id="PRO_1000117558" description="Elongation factor Ts">
    <location>
        <begin position="1"/>
        <end position="295"/>
    </location>
</feature>
<feature type="region of interest" description="Involved in Mg(2+) ion dislocation from EF-Tu" evidence="1">
    <location>
        <begin position="79"/>
        <end position="82"/>
    </location>
</feature>
<name>EFTS_BACAA</name>
<proteinExistence type="inferred from homology"/>
<evidence type="ECO:0000255" key="1">
    <source>
        <dbReference type="HAMAP-Rule" id="MF_00050"/>
    </source>
</evidence>
<organism>
    <name type="scientific">Bacillus anthracis (strain A0248)</name>
    <dbReference type="NCBI Taxonomy" id="592021"/>
    <lineage>
        <taxon>Bacteria</taxon>
        <taxon>Bacillati</taxon>
        <taxon>Bacillota</taxon>
        <taxon>Bacilli</taxon>
        <taxon>Bacillales</taxon>
        <taxon>Bacillaceae</taxon>
        <taxon>Bacillus</taxon>
        <taxon>Bacillus cereus group</taxon>
    </lineage>
</organism>
<gene>
    <name evidence="1" type="primary">tsf</name>
    <name type="ordered locus">BAA_3987</name>
</gene>